<accession>B7L796</accession>
<comment type="function">
    <text evidence="1">Binds to DNA and alters its conformation. May be involved in regulation of gene expression, nucleoid organization and DNA protection.</text>
</comment>
<comment type="subunit">
    <text evidence="1">Homodimer.</text>
</comment>
<comment type="subcellular location">
    <subcellularLocation>
        <location evidence="1">Cytoplasm</location>
        <location evidence="1">Nucleoid</location>
    </subcellularLocation>
</comment>
<comment type="similarity">
    <text evidence="1">Belongs to the YbaB/EbfC family.</text>
</comment>
<sequence>MFGKGGLGNLMKQAQQMQEKMQKMQEEIAQLEVTGESGAGLVKVTINGAHNCRRVEIDPSLLEDDKEMLEDLVAAAFNDAARRIEETQKEKMASVSSGMQLPPGFKMPF</sequence>
<dbReference type="EMBL" id="CU928145">
    <property type="protein sequence ID" value="CAU96357.1"/>
    <property type="molecule type" value="Genomic_DNA"/>
</dbReference>
<dbReference type="RefSeq" id="WP_000467098.1">
    <property type="nucleotide sequence ID" value="NZ_CP028304.1"/>
</dbReference>
<dbReference type="SMR" id="B7L796"/>
<dbReference type="KEGG" id="eck:EC55989_0484"/>
<dbReference type="HOGENOM" id="CLU_140930_0_0_6"/>
<dbReference type="Proteomes" id="UP000000746">
    <property type="component" value="Chromosome"/>
</dbReference>
<dbReference type="GO" id="GO:0043590">
    <property type="term" value="C:bacterial nucleoid"/>
    <property type="evidence" value="ECO:0007669"/>
    <property type="project" value="UniProtKB-UniRule"/>
</dbReference>
<dbReference type="GO" id="GO:0005829">
    <property type="term" value="C:cytosol"/>
    <property type="evidence" value="ECO:0007669"/>
    <property type="project" value="TreeGrafter"/>
</dbReference>
<dbReference type="GO" id="GO:0003677">
    <property type="term" value="F:DNA binding"/>
    <property type="evidence" value="ECO:0007669"/>
    <property type="project" value="UniProtKB-UniRule"/>
</dbReference>
<dbReference type="FunFam" id="3.30.1310.10:FF:000001">
    <property type="entry name" value="Nucleoid-associated protein YbaB"/>
    <property type="match status" value="1"/>
</dbReference>
<dbReference type="Gene3D" id="3.30.1310.10">
    <property type="entry name" value="Nucleoid-associated protein YbaB-like domain"/>
    <property type="match status" value="1"/>
</dbReference>
<dbReference type="HAMAP" id="MF_00274">
    <property type="entry name" value="DNA_YbaB_EbfC"/>
    <property type="match status" value="1"/>
</dbReference>
<dbReference type="InterPro" id="IPR036894">
    <property type="entry name" value="YbaB-like_sf"/>
</dbReference>
<dbReference type="InterPro" id="IPR004401">
    <property type="entry name" value="YbaB/EbfC"/>
</dbReference>
<dbReference type="NCBIfam" id="TIGR00103">
    <property type="entry name" value="DNA_YbaB_EbfC"/>
    <property type="match status" value="1"/>
</dbReference>
<dbReference type="PANTHER" id="PTHR33449">
    <property type="entry name" value="NUCLEOID-ASSOCIATED PROTEIN YBAB"/>
    <property type="match status" value="1"/>
</dbReference>
<dbReference type="PANTHER" id="PTHR33449:SF1">
    <property type="entry name" value="NUCLEOID-ASSOCIATED PROTEIN YBAB"/>
    <property type="match status" value="1"/>
</dbReference>
<dbReference type="Pfam" id="PF02575">
    <property type="entry name" value="YbaB_DNA_bd"/>
    <property type="match status" value="1"/>
</dbReference>
<dbReference type="PIRSF" id="PIRSF004555">
    <property type="entry name" value="UCP004555"/>
    <property type="match status" value="1"/>
</dbReference>
<dbReference type="SUPFAM" id="SSF82607">
    <property type="entry name" value="YbaB-like"/>
    <property type="match status" value="1"/>
</dbReference>
<protein>
    <recommendedName>
        <fullName evidence="1">Nucleoid-associated protein YbaB</fullName>
    </recommendedName>
</protein>
<evidence type="ECO:0000255" key="1">
    <source>
        <dbReference type="HAMAP-Rule" id="MF_00274"/>
    </source>
</evidence>
<gene>
    <name evidence="1" type="primary">ybaB</name>
    <name type="ordered locus">EC55989_0484</name>
</gene>
<name>YBAB_ECO55</name>
<reference key="1">
    <citation type="journal article" date="2009" name="PLoS Genet.">
        <title>Organised genome dynamics in the Escherichia coli species results in highly diverse adaptive paths.</title>
        <authorList>
            <person name="Touchon M."/>
            <person name="Hoede C."/>
            <person name="Tenaillon O."/>
            <person name="Barbe V."/>
            <person name="Baeriswyl S."/>
            <person name="Bidet P."/>
            <person name="Bingen E."/>
            <person name="Bonacorsi S."/>
            <person name="Bouchier C."/>
            <person name="Bouvet O."/>
            <person name="Calteau A."/>
            <person name="Chiapello H."/>
            <person name="Clermont O."/>
            <person name="Cruveiller S."/>
            <person name="Danchin A."/>
            <person name="Diard M."/>
            <person name="Dossat C."/>
            <person name="Karoui M.E."/>
            <person name="Frapy E."/>
            <person name="Garry L."/>
            <person name="Ghigo J.M."/>
            <person name="Gilles A.M."/>
            <person name="Johnson J."/>
            <person name="Le Bouguenec C."/>
            <person name="Lescat M."/>
            <person name="Mangenot S."/>
            <person name="Martinez-Jehanne V."/>
            <person name="Matic I."/>
            <person name="Nassif X."/>
            <person name="Oztas S."/>
            <person name="Petit M.A."/>
            <person name="Pichon C."/>
            <person name="Rouy Z."/>
            <person name="Ruf C.S."/>
            <person name="Schneider D."/>
            <person name="Tourret J."/>
            <person name="Vacherie B."/>
            <person name="Vallenet D."/>
            <person name="Medigue C."/>
            <person name="Rocha E.P.C."/>
            <person name="Denamur E."/>
        </authorList>
    </citation>
    <scope>NUCLEOTIDE SEQUENCE [LARGE SCALE GENOMIC DNA]</scope>
    <source>
        <strain>55989 / EAEC</strain>
    </source>
</reference>
<feature type="chain" id="PRO_1000197654" description="Nucleoid-associated protein YbaB">
    <location>
        <begin position="1"/>
        <end position="109"/>
    </location>
</feature>
<keyword id="KW-0963">Cytoplasm</keyword>
<keyword id="KW-0238">DNA-binding</keyword>
<keyword id="KW-1185">Reference proteome</keyword>
<proteinExistence type="inferred from homology"/>
<organism>
    <name type="scientific">Escherichia coli (strain 55989 / EAEC)</name>
    <dbReference type="NCBI Taxonomy" id="585055"/>
    <lineage>
        <taxon>Bacteria</taxon>
        <taxon>Pseudomonadati</taxon>
        <taxon>Pseudomonadota</taxon>
        <taxon>Gammaproteobacteria</taxon>
        <taxon>Enterobacterales</taxon>
        <taxon>Enterobacteriaceae</taxon>
        <taxon>Escherichia</taxon>
    </lineage>
</organism>